<feature type="chain" id="PRO_0000155201" description="Paraneoplastic antigen Ma1 homolog">
    <location>
        <begin position="1"/>
        <end position="353"/>
    </location>
</feature>
<dbReference type="EMBL" id="AF335505">
    <property type="protein sequence ID" value="AAL73196.1"/>
    <property type="molecule type" value="mRNA"/>
</dbReference>
<dbReference type="EMBL" id="BC097291">
    <property type="protein sequence ID" value="AAH97291.1"/>
    <property type="molecule type" value="mRNA"/>
</dbReference>
<dbReference type="RefSeq" id="NP_570833.1">
    <property type="nucleotide sequence ID" value="NM_130820.2"/>
</dbReference>
<dbReference type="SMR" id="Q8VHZ4"/>
<dbReference type="FunCoup" id="Q8VHZ4">
    <property type="interactions" value="1188"/>
</dbReference>
<dbReference type="STRING" id="10116.ENSRNOP00000014018"/>
<dbReference type="PhosphoSitePlus" id="Q8VHZ4"/>
<dbReference type="PaxDb" id="10116-ENSRNOP00000014018"/>
<dbReference type="Ensembl" id="ENSRNOT00000014018.5">
    <property type="protein sequence ID" value="ENSRNOP00000014018.1"/>
    <property type="gene ID" value="ENSRNOG00000010553.5"/>
</dbReference>
<dbReference type="GeneID" id="170636"/>
<dbReference type="KEGG" id="rno:170636"/>
<dbReference type="UCSC" id="RGD:621230">
    <property type="organism name" value="rat"/>
</dbReference>
<dbReference type="AGR" id="RGD:621230"/>
<dbReference type="CTD" id="9240"/>
<dbReference type="RGD" id="621230">
    <property type="gene designation" value="Pnma1"/>
</dbReference>
<dbReference type="eggNOG" id="ENOG502SPHT">
    <property type="taxonomic scope" value="Eukaryota"/>
</dbReference>
<dbReference type="GeneTree" id="ENSGT01030000234522"/>
<dbReference type="HOGENOM" id="CLU_014694_0_0_1"/>
<dbReference type="InParanoid" id="Q8VHZ4"/>
<dbReference type="OMA" id="EHTNEVM"/>
<dbReference type="OrthoDB" id="115435at2759"/>
<dbReference type="PhylomeDB" id="Q8VHZ4"/>
<dbReference type="TreeFam" id="TF335054"/>
<dbReference type="PRO" id="PR:Q8VHZ4"/>
<dbReference type="Proteomes" id="UP000002494">
    <property type="component" value="Chromosome 6"/>
</dbReference>
<dbReference type="Bgee" id="ENSRNOG00000010553">
    <property type="expression patterns" value="Expressed in testis and 13 other cell types or tissues"/>
</dbReference>
<dbReference type="GO" id="GO:0005737">
    <property type="term" value="C:cytoplasm"/>
    <property type="evidence" value="ECO:0000250"/>
    <property type="project" value="UniProtKB"/>
</dbReference>
<dbReference type="GO" id="GO:0005730">
    <property type="term" value="C:nucleolus"/>
    <property type="evidence" value="ECO:0000250"/>
    <property type="project" value="UniProtKB"/>
</dbReference>
<dbReference type="GO" id="GO:0002437">
    <property type="term" value="P:inflammatory response to antigenic stimulus"/>
    <property type="evidence" value="ECO:0000314"/>
    <property type="project" value="UniProtKB"/>
</dbReference>
<dbReference type="InterPro" id="IPR026523">
    <property type="entry name" value="PNMA"/>
</dbReference>
<dbReference type="InterPro" id="IPR048270">
    <property type="entry name" value="PNMA_C"/>
</dbReference>
<dbReference type="InterPro" id="IPR048271">
    <property type="entry name" value="PNMA_N"/>
</dbReference>
<dbReference type="PANTHER" id="PTHR23095">
    <property type="entry name" value="PARANEOPLASTIC ANTIGEN"/>
    <property type="match status" value="1"/>
</dbReference>
<dbReference type="PANTHER" id="PTHR23095:SF17">
    <property type="entry name" value="PARANEOPLASTIC ANTIGEN MA1"/>
    <property type="match status" value="1"/>
</dbReference>
<dbReference type="Pfam" id="PF14893">
    <property type="entry name" value="PNMA"/>
    <property type="match status" value="1"/>
</dbReference>
<dbReference type="Pfam" id="PF20846">
    <property type="entry name" value="PNMA_N"/>
    <property type="match status" value="1"/>
</dbReference>
<accession>Q8VHZ4</accession>
<accession>Q4V8N4</accession>
<protein>
    <recommendedName>
        <fullName>Paraneoplastic antigen Ma1 homolog</fullName>
    </recommendedName>
</protein>
<name>PNMA1_RAT</name>
<evidence type="ECO:0000250" key="1"/>
<evidence type="ECO:0000269" key="2">
    <source>
    </source>
</evidence>
<evidence type="ECO:0000305" key="3"/>
<organism>
    <name type="scientific">Rattus norvegicus</name>
    <name type="common">Rat</name>
    <dbReference type="NCBI Taxonomy" id="10116"/>
    <lineage>
        <taxon>Eukaryota</taxon>
        <taxon>Metazoa</taxon>
        <taxon>Chordata</taxon>
        <taxon>Craniata</taxon>
        <taxon>Vertebrata</taxon>
        <taxon>Euteleostomi</taxon>
        <taxon>Mammalia</taxon>
        <taxon>Eutheria</taxon>
        <taxon>Euarchontoglires</taxon>
        <taxon>Glires</taxon>
        <taxon>Rodentia</taxon>
        <taxon>Myomorpha</taxon>
        <taxon>Muroidea</taxon>
        <taxon>Muridae</taxon>
        <taxon>Murinae</taxon>
        <taxon>Rattus</taxon>
    </lineage>
</organism>
<keyword id="KW-0539">Nucleus</keyword>
<keyword id="KW-1185">Reference proteome</keyword>
<comment type="subcellular location">
    <subcellularLocation>
        <location evidence="1">Nucleus</location>
        <location evidence="1">Nucleolus</location>
    </subcellularLocation>
</comment>
<comment type="tissue specificity">
    <text evidence="2">Testis and brain specific.</text>
</comment>
<comment type="similarity">
    <text evidence="3">Belongs to the PNMA family.</text>
</comment>
<gene>
    <name type="primary">Pnma1</name>
    <name type="synonym">Ma1</name>
</gene>
<sequence>MAMTLLEDWCRGMDVNSQRALLVWGIPVNCDETEIEETLQAAMPQVSYRVLGRMFWREENAKAALLELTGTVDYSLIPREMPGKGGLWKVVFKPPTSDAEFLERLHLFLAREGWTVQDVARVLGFQNPAPAPGPEMPAEMLNYILDNVIQPLVESIWYKKLTLFSGRDIPGPGEETFDSWLEHSNEVIEEWQVSDIEKRRRLMESLRGPAADVIRILKTNNPAITTAECLKALEQVFGSVESSRDAQVRFLNTYQNPGEKLSSYVIRLEPLLQKVVDKGAIDKDNVNQARLEQVIAGANHSGALRRQLWLTGATEGPAPNLFQLLVQIREEEAKEEEEEAEAALLQLGLEGHF</sequence>
<reference key="1">
    <citation type="journal article" date="1999" name="Brain">
        <title>Ma1, a novel neuron- and testis-specific protein, is recognized by the serum of patients with paraneoplastic neurological disorders.</title>
        <authorList>
            <person name="Dalmau J."/>
            <person name="Gultekin S.H."/>
            <person name="Voltz R."/>
            <person name="Hoard R."/>
            <person name="DesChamps T."/>
            <person name="Balmaceda C."/>
            <person name="Batchelor T."/>
            <person name="Gerstner E."/>
            <person name="Eichen J."/>
            <person name="Frennier J."/>
            <person name="Posner J.B."/>
            <person name="Rosenfeld M.R."/>
        </authorList>
    </citation>
    <scope>NUCLEOTIDE SEQUENCE [MRNA]</scope>
    <scope>TISSUE SPECIFICITY</scope>
</reference>
<reference key="2">
    <citation type="journal article" date="2004" name="Genome Res.">
        <title>The status, quality, and expansion of the NIH full-length cDNA project: the Mammalian Gene Collection (MGC).</title>
        <authorList>
            <consortium name="The MGC Project Team"/>
        </authorList>
    </citation>
    <scope>NUCLEOTIDE SEQUENCE [LARGE SCALE MRNA]</scope>
    <source>
        <tissue>Testis</tissue>
    </source>
</reference>
<proteinExistence type="evidence at transcript level"/>